<proteinExistence type="inferred from homology"/>
<reference key="1">
    <citation type="journal article" date="2001" name="Nature">
        <title>Complete genome sequence of Salmonella enterica serovar Typhimurium LT2.</title>
        <authorList>
            <person name="McClelland M."/>
            <person name="Sanderson K.E."/>
            <person name="Spieth J."/>
            <person name="Clifton S.W."/>
            <person name="Latreille P."/>
            <person name="Courtney L."/>
            <person name="Porwollik S."/>
            <person name="Ali J."/>
            <person name="Dante M."/>
            <person name="Du F."/>
            <person name="Hou S."/>
            <person name="Layman D."/>
            <person name="Leonard S."/>
            <person name="Nguyen C."/>
            <person name="Scott K."/>
            <person name="Holmes A."/>
            <person name="Grewal N."/>
            <person name="Mulvaney E."/>
            <person name="Ryan E."/>
            <person name="Sun H."/>
            <person name="Florea L."/>
            <person name="Miller W."/>
            <person name="Stoneking T."/>
            <person name="Nhan M."/>
            <person name="Waterston R."/>
            <person name="Wilson R.K."/>
        </authorList>
    </citation>
    <scope>NUCLEOTIDE SEQUENCE [LARGE SCALE GENOMIC DNA]</scope>
    <source>
        <strain>LT2 / SGSC1412 / ATCC 700720</strain>
    </source>
</reference>
<accession>Q8ZM06</accession>
<keyword id="KW-0963">Cytoplasm</keyword>
<keyword id="KW-0521">NADP</keyword>
<keyword id="KW-0560">Oxidoreductase</keyword>
<keyword id="KW-1185">Reference proteome</keyword>
<name>DKGA_SALTY</name>
<protein>
    <recommendedName>
        <fullName evidence="2">Methylglyoxal reductase DkgA</fullName>
        <ecNumber evidence="2">1.1.1.-</ecNumber>
    </recommendedName>
</protein>
<dbReference type="EC" id="1.1.1.-" evidence="2"/>
<dbReference type="EMBL" id="AE006468">
    <property type="protein sequence ID" value="AAL22039.1"/>
    <property type="molecule type" value="Genomic_DNA"/>
</dbReference>
<dbReference type="RefSeq" id="WP_000013100.1">
    <property type="nucleotide sequence ID" value="NC_003197.2"/>
</dbReference>
<dbReference type="SMR" id="Q8ZM06"/>
<dbReference type="STRING" id="99287.STM3165"/>
<dbReference type="PaxDb" id="99287-STM3165"/>
<dbReference type="KEGG" id="stm:STM3165"/>
<dbReference type="PATRIC" id="fig|99287.12.peg.3355"/>
<dbReference type="HOGENOM" id="CLU_023205_0_1_6"/>
<dbReference type="OMA" id="YCLQKNW"/>
<dbReference type="PhylomeDB" id="Q8ZM06"/>
<dbReference type="BioCyc" id="SENT99287:STM3165-MONOMER"/>
<dbReference type="Proteomes" id="UP000001014">
    <property type="component" value="Chromosome"/>
</dbReference>
<dbReference type="GO" id="GO:0005829">
    <property type="term" value="C:cytosol"/>
    <property type="evidence" value="ECO:0000318"/>
    <property type="project" value="GO_Central"/>
</dbReference>
<dbReference type="GO" id="GO:0004032">
    <property type="term" value="F:aldose reductase (NADPH) activity"/>
    <property type="evidence" value="ECO:0000318"/>
    <property type="project" value="GO_Central"/>
</dbReference>
<dbReference type="GO" id="GO:0019853">
    <property type="term" value="P:L-ascorbic acid biosynthetic process"/>
    <property type="evidence" value="ECO:0007669"/>
    <property type="project" value="UniProtKB-KW"/>
</dbReference>
<dbReference type="GO" id="GO:0051596">
    <property type="term" value="P:methylglyoxal catabolic process"/>
    <property type="evidence" value="ECO:0000318"/>
    <property type="project" value="GO_Central"/>
</dbReference>
<dbReference type="FunFam" id="3.20.20.100:FF:000002">
    <property type="entry name" value="2,5-diketo-D-gluconic acid reductase A"/>
    <property type="match status" value="1"/>
</dbReference>
<dbReference type="Gene3D" id="3.20.20.100">
    <property type="entry name" value="NADP-dependent oxidoreductase domain"/>
    <property type="match status" value="1"/>
</dbReference>
<dbReference type="InterPro" id="IPR020471">
    <property type="entry name" value="AKR"/>
</dbReference>
<dbReference type="InterPro" id="IPR018170">
    <property type="entry name" value="Aldo/ket_reductase_CS"/>
</dbReference>
<dbReference type="InterPro" id="IPR023210">
    <property type="entry name" value="NADP_OxRdtase_dom"/>
</dbReference>
<dbReference type="InterPro" id="IPR036812">
    <property type="entry name" value="NADP_OxRdtase_dom_sf"/>
</dbReference>
<dbReference type="NCBIfam" id="NF008598">
    <property type="entry name" value="PRK11565.1"/>
    <property type="match status" value="1"/>
</dbReference>
<dbReference type="PANTHER" id="PTHR43827">
    <property type="entry name" value="2,5-DIKETO-D-GLUCONIC ACID REDUCTASE"/>
    <property type="match status" value="1"/>
</dbReference>
<dbReference type="PANTHER" id="PTHR43827:SF3">
    <property type="entry name" value="NADP-DEPENDENT OXIDOREDUCTASE DOMAIN-CONTAINING PROTEIN"/>
    <property type="match status" value="1"/>
</dbReference>
<dbReference type="Pfam" id="PF00248">
    <property type="entry name" value="Aldo_ket_red"/>
    <property type="match status" value="1"/>
</dbReference>
<dbReference type="PIRSF" id="PIRSF000097">
    <property type="entry name" value="AKR"/>
    <property type="match status" value="1"/>
</dbReference>
<dbReference type="PRINTS" id="PR00069">
    <property type="entry name" value="ALDKETRDTASE"/>
</dbReference>
<dbReference type="SUPFAM" id="SSF51430">
    <property type="entry name" value="NAD(P)-linked oxidoreductase"/>
    <property type="match status" value="1"/>
</dbReference>
<dbReference type="PROSITE" id="PS00798">
    <property type="entry name" value="ALDOKETO_REDUCTASE_1"/>
    <property type="match status" value="1"/>
</dbReference>
<dbReference type="PROSITE" id="PS00062">
    <property type="entry name" value="ALDOKETO_REDUCTASE_2"/>
    <property type="match status" value="1"/>
</dbReference>
<dbReference type="PROSITE" id="PS00063">
    <property type="entry name" value="ALDOKETO_REDUCTASE_3"/>
    <property type="match status" value="1"/>
</dbReference>
<evidence type="ECO:0000250" key="1"/>
<evidence type="ECO:0000250" key="2">
    <source>
        <dbReference type="UniProtKB" id="Q46857"/>
    </source>
</evidence>
<evidence type="ECO:0000305" key="3"/>
<sequence>MANPTIIRLQDGNVMPQLGLGVWKASNEEVIAAIHKALEVGYRSIDTATAYQNEEGVGKALKAASVAREELFITTKLWNDDQKRPREALQESLKKLQLDYLDLYLMHWPVPAIDHYVDAWKGMIALQKEGLVKSIGVCNFQIHHLQRLIDETGVTPVINQIELHPLMQQRQLHAWNATHKIQTESWSPLAQGGEGVFDQKVIRELADKYGKTPAQIVIRWHLDCGLVVIPKSVTPSRIAENFAVWDFRLDKDELGEIAKLDQGKRLGPDPDQFGG</sequence>
<comment type="function">
    <text evidence="2">Aldo-keto reductase that significantly contributes to cellular methylglyoxal detoxification by catalyzing the NADPH-dependent conversion of methylglyoxal to acetol.</text>
</comment>
<comment type="catalytic activity">
    <reaction evidence="2">
        <text>hydroxyacetone + NADP(+) = methylglyoxal + NADPH + H(+)</text>
        <dbReference type="Rhea" id="RHEA:27986"/>
        <dbReference type="ChEBI" id="CHEBI:15378"/>
        <dbReference type="ChEBI" id="CHEBI:17158"/>
        <dbReference type="ChEBI" id="CHEBI:27957"/>
        <dbReference type="ChEBI" id="CHEBI:57783"/>
        <dbReference type="ChEBI" id="CHEBI:58349"/>
    </reaction>
</comment>
<comment type="subunit">
    <text evidence="2">Monomer.</text>
</comment>
<comment type="subcellular location">
    <subcellularLocation>
        <location evidence="3">Cytoplasm</location>
    </subcellularLocation>
</comment>
<comment type="similarity">
    <text evidence="3">Belongs to the aldo/keto reductase family.</text>
</comment>
<organism>
    <name type="scientific">Salmonella typhimurium (strain LT2 / SGSC1412 / ATCC 700720)</name>
    <dbReference type="NCBI Taxonomy" id="99287"/>
    <lineage>
        <taxon>Bacteria</taxon>
        <taxon>Pseudomonadati</taxon>
        <taxon>Pseudomonadota</taxon>
        <taxon>Gammaproteobacteria</taxon>
        <taxon>Enterobacterales</taxon>
        <taxon>Enterobacteriaceae</taxon>
        <taxon>Salmonella</taxon>
    </lineage>
</organism>
<gene>
    <name evidence="2" type="primary">dkgA</name>
    <name type="ordered locus">STM3165</name>
</gene>
<feature type="chain" id="PRO_0000124602" description="Methylglyoxal reductase DkgA">
    <location>
        <begin position="1"/>
        <end position="275"/>
    </location>
</feature>
<feature type="active site" description="Proton donor" evidence="1">
    <location>
        <position position="51"/>
    </location>
</feature>
<feature type="binding site" evidence="1">
    <location>
        <position position="107"/>
    </location>
    <ligand>
        <name>substrate</name>
    </ligand>
</feature>
<feature type="binding site" evidence="1">
    <location>
        <begin position="187"/>
        <end position="241"/>
    </location>
    <ligand>
        <name>NADP(+)</name>
        <dbReference type="ChEBI" id="CHEBI:58349"/>
    </ligand>
</feature>